<feature type="chain" id="PRO_0000095517" description="Glutamate racemase">
    <location>
        <begin position="1"/>
        <end position="264"/>
    </location>
</feature>
<feature type="active site" description="Proton donor/acceptor" evidence="1">
    <location>
        <position position="73"/>
    </location>
</feature>
<feature type="active site" description="Proton donor/acceptor" evidence="1">
    <location>
        <position position="183"/>
    </location>
</feature>
<feature type="binding site" evidence="1">
    <location>
        <begin position="10"/>
        <end position="11"/>
    </location>
    <ligand>
        <name>substrate</name>
    </ligand>
</feature>
<feature type="binding site" evidence="1">
    <location>
        <begin position="42"/>
        <end position="43"/>
    </location>
    <ligand>
        <name>substrate</name>
    </ligand>
</feature>
<feature type="binding site" evidence="1">
    <location>
        <begin position="74"/>
        <end position="75"/>
    </location>
    <ligand>
        <name>substrate</name>
    </ligand>
</feature>
<feature type="binding site" evidence="1">
    <location>
        <begin position="184"/>
        <end position="185"/>
    </location>
    <ligand>
        <name>substrate</name>
    </ligand>
</feature>
<protein>
    <recommendedName>
        <fullName evidence="1">Glutamate racemase</fullName>
        <ecNumber evidence="1">5.1.1.3</ecNumber>
    </recommendedName>
</protein>
<comment type="function">
    <text evidence="1">Provides the (R)-glutamate required for cell wall biosynthesis.</text>
</comment>
<comment type="catalytic activity">
    <reaction evidence="1">
        <text>L-glutamate = D-glutamate</text>
        <dbReference type="Rhea" id="RHEA:12813"/>
        <dbReference type="ChEBI" id="CHEBI:29985"/>
        <dbReference type="ChEBI" id="CHEBI:29986"/>
        <dbReference type="EC" id="5.1.1.3"/>
    </reaction>
</comment>
<comment type="pathway">
    <text evidence="1">Cell wall biogenesis; peptidoglycan biosynthesis.</text>
</comment>
<comment type="similarity">
    <text evidence="1">Belongs to the aspartate/glutamate racemases family.</text>
</comment>
<name>MURI_STRA5</name>
<organism>
    <name type="scientific">Streptococcus agalactiae serotype V (strain ATCC BAA-611 / 2603 V/R)</name>
    <dbReference type="NCBI Taxonomy" id="208435"/>
    <lineage>
        <taxon>Bacteria</taxon>
        <taxon>Bacillati</taxon>
        <taxon>Bacillota</taxon>
        <taxon>Bacilli</taxon>
        <taxon>Lactobacillales</taxon>
        <taxon>Streptococcaceae</taxon>
        <taxon>Streptococcus</taxon>
    </lineage>
</organism>
<keyword id="KW-0133">Cell shape</keyword>
<keyword id="KW-0961">Cell wall biogenesis/degradation</keyword>
<keyword id="KW-0413">Isomerase</keyword>
<keyword id="KW-0573">Peptidoglycan synthesis</keyword>
<keyword id="KW-1185">Reference proteome</keyword>
<dbReference type="EC" id="5.1.1.3" evidence="1"/>
<dbReference type="EMBL" id="AE009948">
    <property type="protein sequence ID" value="AAN00464.1"/>
    <property type="molecule type" value="Genomic_DNA"/>
</dbReference>
<dbReference type="RefSeq" id="NP_688591.1">
    <property type="nucleotide sequence ID" value="NC_004116.1"/>
</dbReference>
<dbReference type="SMR" id="Q8DY92"/>
<dbReference type="STRING" id="208435.SAG1600"/>
<dbReference type="KEGG" id="sag:SAG1600"/>
<dbReference type="PATRIC" id="fig|208435.3.peg.1610"/>
<dbReference type="HOGENOM" id="CLU_052344_0_2_9"/>
<dbReference type="OrthoDB" id="9801055at2"/>
<dbReference type="UniPathway" id="UPA00219"/>
<dbReference type="Proteomes" id="UP000000821">
    <property type="component" value="Chromosome"/>
</dbReference>
<dbReference type="GO" id="GO:0008881">
    <property type="term" value="F:glutamate racemase activity"/>
    <property type="evidence" value="ECO:0007669"/>
    <property type="project" value="UniProtKB-UniRule"/>
</dbReference>
<dbReference type="GO" id="GO:0071555">
    <property type="term" value="P:cell wall organization"/>
    <property type="evidence" value="ECO:0007669"/>
    <property type="project" value="UniProtKB-KW"/>
</dbReference>
<dbReference type="GO" id="GO:0009252">
    <property type="term" value="P:peptidoglycan biosynthetic process"/>
    <property type="evidence" value="ECO:0007669"/>
    <property type="project" value="UniProtKB-UniRule"/>
</dbReference>
<dbReference type="GO" id="GO:0008360">
    <property type="term" value="P:regulation of cell shape"/>
    <property type="evidence" value="ECO:0007669"/>
    <property type="project" value="UniProtKB-KW"/>
</dbReference>
<dbReference type="FunFam" id="3.40.50.1860:FF:000002">
    <property type="entry name" value="Glutamate racemase"/>
    <property type="match status" value="1"/>
</dbReference>
<dbReference type="Gene3D" id="3.40.50.1860">
    <property type="match status" value="2"/>
</dbReference>
<dbReference type="HAMAP" id="MF_00258">
    <property type="entry name" value="Glu_racemase"/>
    <property type="match status" value="1"/>
</dbReference>
<dbReference type="InterPro" id="IPR015942">
    <property type="entry name" value="Asp/Glu/hydantoin_racemase"/>
</dbReference>
<dbReference type="InterPro" id="IPR001920">
    <property type="entry name" value="Asp/Glu_race"/>
</dbReference>
<dbReference type="InterPro" id="IPR018187">
    <property type="entry name" value="Asp/Glu_racemase_AS_1"/>
</dbReference>
<dbReference type="InterPro" id="IPR033134">
    <property type="entry name" value="Asp/Glu_racemase_AS_2"/>
</dbReference>
<dbReference type="InterPro" id="IPR004391">
    <property type="entry name" value="Glu_race"/>
</dbReference>
<dbReference type="NCBIfam" id="TIGR00067">
    <property type="entry name" value="glut_race"/>
    <property type="match status" value="1"/>
</dbReference>
<dbReference type="NCBIfam" id="NF002035">
    <property type="entry name" value="PRK00865.1-3"/>
    <property type="match status" value="1"/>
</dbReference>
<dbReference type="PANTHER" id="PTHR21198">
    <property type="entry name" value="GLUTAMATE RACEMASE"/>
    <property type="match status" value="1"/>
</dbReference>
<dbReference type="PANTHER" id="PTHR21198:SF2">
    <property type="entry name" value="GLUTAMATE RACEMASE"/>
    <property type="match status" value="1"/>
</dbReference>
<dbReference type="Pfam" id="PF01177">
    <property type="entry name" value="Asp_Glu_race"/>
    <property type="match status" value="1"/>
</dbReference>
<dbReference type="SUPFAM" id="SSF53681">
    <property type="entry name" value="Aspartate/glutamate racemase"/>
    <property type="match status" value="2"/>
</dbReference>
<dbReference type="PROSITE" id="PS00923">
    <property type="entry name" value="ASP_GLU_RACEMASE_1"/>
    <property type="match status" value="1"/>
</dbReference>
<dbReference type="PROSITE" id="PS00924">
    <property type="entry name" value="ASP_GLU_RACEMASE_2"/>
    <property type="match status" value="1"/>
</dbReference>
<evidence type="ECO:0000255" key="1">
    <source>
        <dbReference type="HAMAP-Rule" id="MF_00258"/>
    </source>
</evidence>
<accession>Q8DY92</accession>
<sequence length="264" mass="29127">MDSRPIGFLDSGVGGLTVVKEMFRQLPEEEVIFIGDQARAPYGPRPAQQIREFTWQMVNFLLTKNVKMIVIACNTATAVAWQEIKEKLDIPVLGVILPGASAAIKSTNLGKVGIIGTPMTVKSDAYRQKIQALSPNTAVVSLACPKFVPIVESNQMSSSLAKKVVYETLSPLVGKLDTLILGCTHYPLLRPIIQNVMGAEVKLIDSGAETVRDISVLLNYFEINHNWQNKHGGHHFYTTASPKGFKEIAEQWLSQEINVERIVL</sequence>
<reference key="1">
    <citation type="journal article" date="2002" name="Proc. Natl. Acad. Sci. U.S.A.">
        <title>Complete genome sequence and comparative genomic analysis of an emerging human pathogen, serotype V Streptococcus agalactiae.</title>
        <authorList>
            <person name="Tettelin H."/>
            <person name="Masignani V."/>
            <person name="Cieslewicz M.J."/>
            <person name="Eisen J.A."/>
            <person name="Peterson S.N."/>
            <person name="Wessels M.R."/>
            <person name="Paulsen I.T."/>
            <person name="Nelson K.E."/>
            <person name="Margarit I."/>
            <person name="Read T.D."/>
            <person name="Madoff L.C."/>
            <person name="Wolf A.M."/>
            <person name="Beanan M.J."/>
            <person name="Brinkac L.M."/>
            <person name="Daugherty S.C."/>
            <person name="DeBoy R.T."/>
            <person name="Durkin A.S."/>
            <person name="Kolonay J.F."/>
            <person name="Madupu R."/>
            <person name="Lewis M.R."/>
            <person name="Radune D."/>
            <person name="Fedorova N.B."/>
            <person name="Scanlan D."/>
            <person name="Khouri H.M."/>
            <person name="Mulligan S."/>
            <person name="Carty H.A."/>
            <person name="Cline R.T."/>
            <person name="Van Aken S.E."/>
            <person name="Gill J."/>
            <person name="Scarselli M."/>
            <person name="Mora M."/>
            <person name="Iacobini E.T."/>
            <person name="Brettoni C."/>
            <person name="Galli G."/>
            <person name="Mariani M."/>
            <person name="Vegni F."/>
            <person name="Maione D."/>
            <person name="Rinaudo D."/>
            <person name="Rappuoli R."/>
            <person name="Telford J.L."/>
            <person name="Kasper D.L."/>
            <person name="Grandi G."/>
            <person name="Fraser C.M."/>
        </authorList>
    </citation>
    <scope>NUCLEOTIDE SEQUENCE [LARGE SCALE GENOMIC DNA]</scope>
    <source>
        <strain>ATCC BAA-611 / 2603 V/R</strain>
    </source>
</reference>
<proteinExistence type="inferred from homology"/>
<gene>
    <name evidence="1" type="primary">murI</name>
    <name type="ordered locus">SAG1600</name>
</gene>